<proteinExistence type="inferred from homology"/>
<evidence type="ECO:0000255" key="1">
    <source>
        <dbReference type="HAMAP-Rule" id="MF_01369"/>
    </source>
</evidence>
<evidence type="ECO:0000305" key="2"/>
<dbReference type="EMBL" id="CP000247">
    <property type="protein sequence ID" value="ABG71386.1"/>
    <property type="molecule type" value="Genomic_DNA"/>
</dbReference>
<dbReference type="RefSeq" id="WP_000617544.1">
    <property type="nucleotide sequence ID" value="NC_008253.1"/>
</dbReference>
<dbReference type="SMR" id="Q0TCE3"/>
<dbReference type="GeneID" id="93778669"/>
<dbReference type="KEGG" id="ecp:ECP_3406"/>
<dbReference type="HOGENOM" id="CLU_037562_3_1_6"/>
<dbReference type="Proteomes" id="UP000009182">
    <property type="component" value="Chromosome"/>
</dbReference>
<dbReference type="GO" id="GO:1990904">
    <property type="term" value="C:ribonucleoprotein complex"/>
    <property type="evidence" value="ECO:0007669"/>
    <property type="project" value="UniProtKB-KW"/>
</dbReference>
<dbReference type="GO" id="GO:0005840">
    <property type="term" value="C:ribosome"/>
    <property type="evidence" value="ECO:0007669"/>
    <property type="project" value="UniProtKB-KW"/>
</dbReference>
<dbReference type="GO" id="GO:0019843">
    <property type="term" value="F:rRNA binding"/>
    <property type="evidence" value="ECO:0007669"/>
    <property type="project" value="UniProtKB-UniRule"/>
</dbReference>
<dbReference type="GO" id="GO:0003735">
    <property type="term" value="F:structural constituent of ribosome"/>
    <property type="evidence" value="ECO:0007669"/>
    <property type="project" value="InterPro"/>
</dbReference>
<dbReference type="GO" id="GO:0006412">
    <property type="term" value="P:translation"/>
    <property type="evidence" value="ECO:0007669"/>
    <property type="project" value="UniProtKB-UniRule"/>
</dbReference>
<dbReference type="FunFam" id="3.30.70.330:FF:000001">
    <property type="entry name" value="50S ribosomal protein L23"/>
    <property type="match status" value="1"/>
</dbReference>
<dbReference type="Gene3D" id="3.30.70.330">
    <property type="match status" value="1"/>
</dbReference>
<dbReference type="HAMAP" id="MF_01369_B">
    <property type="entry name" value="Ribosomal_uL23_B"/>
    <property type="match status" value="1"/>
</dbReference>
<dbReference type="InterPro" id="IPR012677">
    <property type="entry name" value="Nucleotide-bd_a/b_plait_sf"/>
</dbReference>
<dbReference type="InterPro" id="IPR013025">
    <property type="entry name" value="Ribosomal_uL23-like"/>
</dbReference>
<dbReference type="InterPro" id="IPR012678">
    <property type="entry name" value="Ribosomal_uL23/eL15/eS24_sf"/>
</dbReference>
<dbReference type="InterPro" id="IPR001014">
    <property type="entry name" value="Ribosomal_uL23_CS"/>
</dbReference>
<dbReference type="NCBIfam" id="NF004358">
    <property type="entry name" value="PRK05738.1-1"/>
    <property type="match status" value="1"/>
</dbReference>
<dbReference type="NCBIfam" id="NF004359">
    <property type="entry name" value="PRK05738.1-3"/>
    <property type="match status" value="1"/>
</dbReference>
<dbReference type="NCBIfam" id="NF004363">
    <property type="entry name" value="PRK05738.2-4"/>
    <property type="match status" value="1"/>
</dbReference>
<dbReference type="PANTHER" id="PTHR11620">
    <property type="entry name" value="60S RIBOSOMAL PROTEIN L23A"/>
    <property type="match status" value="1"/>
</dbReference>
<dbReference type="Pfam" id="PF00276">
    <property type="entry name" value="Ribosomal_L23"/>
    <property type="match status" value="1"/>
</dbReference>
<dbReference type="SUPFAM" id="SSF54189">
    <property type="entry name" value="Ribosomal proteins S24e, L23 and L15e"/>
    <property type="match status" value="1"/>
</dbReference>
<dbReference type="PROSITE" id="PS00050">
    <property type="entry name" value="RIBOSOMAL_L23"/>
    <property type="match status" value="1"/>
</dbReference>
<organism>
    <name type="scientific">Escherichia coli O6:K15:H31 (strain 536 / UPEC)</name>
    <dbReference type="NCBI Taxonomy" id="362663"/>
    <lineage>
        <taxon>Bacteria</taxon>
        <taxon>Pseudomonadati</taxon>
        <taxon>Pseudomonadota</taxon>
        <taxon>Gammaproteobacteria</taxon>
        <taxon>Enterobacterales</taxon>
        <taxon>Enterobacteriaceae</taxon>
        <taxon>Escherichia</taxon>
    </lineage>
</organism>
<name>RL23_ECOL5</name>
<feature type="chain" id="PRO_0000272745" description="Large ribosomal subunit protein uL23">
    <location>
        <begin position="1"/>
        <end position="100"/>
    </location>
</feature>
<comment type="function">
    <text evidence="1">One of the early assembly proteins it binds 23S rRNA. One of the proteins that surrounds the polypeptide exit tunnel on the outside of the ribosome. Forms the main docking site for trigger factor binding to the ribosome.</text>
</comment>
<comment type="subunit">
    <text evidence="1">Part of the 50S ribosomal subunit. Contacts protein L29, and trigger factor when it is bound to the ribosome.</text>
</comment>
<comment type="similarity">
    <text evidence="1">Belongs to the universal ribosomal protein uL23 family.</text>
</comment>
<gene>
    <name evidence="1" type="primary">rplW</name>
    <name type="ordered locus">ECP_3406</name>
</gene>
<keyword id="KW-0687">Ribonucleoprotein</keyword>
<keyword id="KW-0689">Ribosomal protein</keyword>
<keyword id="KW-0694">RNA-binding</keyword>
<keyword id="KW-0699">rRNA-binding</keyword>
<reference key="1">
    <citation type="journal article" date="2006" name="Mol. Microbiol.">
        <title>Role of pathogenicity island-associated integrases in the genome plasticity of uropathogenic Escherichia coli strain 536.</title>
        <authorList>
            <person name="Hochhut B."/>
            <person name="Wilde C."/>
            <person name="Balling G."/>
            <person name="Middendorf B."/>
            <person name="Dobrindt U."/>
            <person name="Brzuszkiewicz E."/>
            <person name="Gottschalk G."/>
            <person name="Carniel E."/>
            <person name="Hacker J."/>
        </authorList>
    </citation>
    <scope>NUCLEOTIDE SEQUENCE [LARGE SCALE GENOMIC DNA]</scope>
    <source>
        <strain>536 / UPEC</strain>
    </source>
</reference>
<sequence>MIREERLLKVLRAPHVSEKASTAMEKSNTIVLKVAKDATKAEIKAAVQKLFEVEVEVVNTLVVKGKVKRHGQRIGRRSDWKKAYVTLKEGQNLDFVGGAE</sequence>
<protein>
    <recommendedName>
        <fullName evidence="1">Large ribosomal subunit protein uL23</fullName>
    </recommendedName>
    <alternativeName>
        <fullName evidence="2">50S ribosomal protein L23</fullName>
    </alternativeName>
</protein>
<accession>Q0TCE3</accession>